<name>RL1_XANE5</name>
<gene>
    <name evidence="1" type="primary">rplA</name>
    <name type="ordered locus">XCV0988</name>
</gene>
<reference key="1">
    <citation type="journal article" date="2005" name="J. Bacteriol.">
        <title>Insights into genome plasticity and pathogenicity of the plant pathogenic Bacterium Xanthomonas campestris pv. vesicatoria revealed by the complete genome sequence.</title>
        <authorList>
            <person name="Thieme F."/>
            <person name="Koebnik R."/>
            <person name="Bekel T."/>
            <person name="Berger C."/>
            <person name="Boch J."/>
            <person name="Buettner D."/>
            <person name="Caldana C."/>
            <person name="Gaigalat L."/>
            <person name="Goesmann A."/>
            <person name="Kay S."/>
            <person name="Kirchner O."/>
            <person name="Lanz C."/>
            <person name="Linke B."/>
            <person name="McHardy A.C."/>
            <person name="Meyer F."/>
            <person name="Mittenhuber G."/>
            <person name="Nies D.H."/>
            <person name="Niesbach-Kloesgen U."/>
            <person name="Patschkowski T."/>
            <person name="Rueckert C."/>
            <person name="Rupp O."/>
            <person name="Schneiker S."/>
            <person name="Schuster S.C."/>
            <person name="Vorhoelter F.J."/>
            <person name="Weber E."/>
            <person name="Puehler A."/>
            <person name="Bonas U."/>
            <person name="Bartels D."/>
            <person name="Kaiser O."/>
        </authorList>
    </citation>
    <scope>NUCLEOTIDE SEQUENCE [LARGE SCALE GENOMIC DNA]</scope>
    <source>
        <strain>85-10</strain>
    </source>
</reference>
<keyword id="KW-0678">Repressor</keyword>
<keyword id="KW-0687">Ribonucleoprotein</keyword>
<keyword id="KW-0689">Ribosomal protein</keyword>
<keyword id="KW-0694">RNA-binding</keyword>
<keyword id="KW-0699">rRNA-binding</keyword>
<keyword id="KW-0810">Translation regulation</keyword>
<keyword id="KW-0820">tRNA-binding</keyword>
<sequence length="232" mass="23967">MAQSKRVKAITAAVVPGKTYAFEDAIKILKTATKAKFVESIDVAVRLGVDAKKSDQQVRGSTVLPAGTGKSVRVAVFAPAGAKADEALAAGAEAVGMDDLAEKMQAGDLNYDVVIATPDAMRVVGKLGTLLGPRGLMPNPKVGTVSANPGEAVKNAKSGQVRYRTDKAGIIHCTIGKASFDDEALKSNLQALLLDLVKAKPATSKGTYLQKVSVSSTMGPGVTVDQSSLSLK</sequence>
<organism>
    <name type="scientific">Xanthomonas euvesicatoria pv. vesicatoria (strain 85-10)</name>
    <name type="common">Xanthomonas campestris pv. vesicatoria</name>
    <dbReference type="NCBI Taxonomy" id="316273"/>
    <lineage>
        <taxon>Bacteria</taxon>
        <taxon>Pseudomonadati</taxon>
        <taxon>Pseudomonadota</taxon>
        <taxon>Gammaproteobacteria</taxon>
        <taxon>Lysobacterales</taxon>
        <taxon>Lysobacteraceae</taxon>
        <taxon>Xanthomonas</taxon>
    </lineage>
</organism>
<feature type="chain" id="PRO_0000230651" description="Large ribosomal subunit protein uL1">
    <location>
        <begin position="1"/>
        <end position="232"/>
    </location>
</feature>
<accession>Q3BWZ4</accession>
<dbReference type="EMBL" id="AM039952">
    <property type="protein sequence ID" value="CAJ22619.1"/>
    <property type="molecule type" value="Genomic_DNA"/>
</dbReference>
<dbReference type="RefSeq" id="WP_003486747.1">
    <property type="nucleotide sequence ID" value="NZ_CP017190.1"/>
</dbReference>
<dbReference type="SMR" id="Q3BWZ4"/>
<dbReference type="STRING" id="456327.BJD11_17795"/>
<dbReference type="GeneID" id="97509325"/>
<dbReference type="KEGG" id="xcv:XCV0988"/>
<dbReference type="eggNOG" id="COG0081">
    <property type="taxonomic scope" value="Bacteria"/>
</dbReference>
<dbReference type="HOGENOM" id="CLU_062853_0_0_6"/>
<dbReference type="Proteomes" id="UP000007069">
    <property type="component" value="Chromosome"/>
</dbReference>
<dbReference type="GO" id="GO:0022625">
    <property type="term" value="C:cytosolic large ribosomal subunit"/>
    <property type="evidence" value="ECO:0007669"/>
    <property type="project" value="TreeGrafter"/>
</dbReference>
<dbReference type="GO" id="GO:0019843">
    <property type="term" value="F:rRNA binding"/>
    <property type="evidence" value="ECO:0007669"/>
    <property type="project" value="UniProtKB-UniRule"/>
</dbReference>
<dbReference type="GO" id="GO:0003735">
    <property type="term" value="F:structural constituent of ribosome"/>
    <property type="evidence" value="ECO:0007669"/>
    <property type="project" value="InterPro"/>
</dbReference>
<dbReference type="GO" id="GO:0000049">
    <property type="term" value="F:tRNA binding"/>
    <property type="evidence" value="ECO:0007669"/>
    <property type="project" value="UniProtKB-KW"/>
</dbReference>
<dbReference type="GO" id="GO:0006417">
    <property type="term" value="P:regulation of translation"/>
    <property type="evidence" value="ECO:0007669"/>
    <property type="project" value="UniProtKB-KW"/>
</dbReference>
<dbReference type="GO" id="GO:0006412">
    <property type="term" value="P:translation"/>
    <property type="evidence" value="ECO:0007669"/>
    <property type="project" value="UniProtKB-UniRule"/>
</dbReference>
<dbReference type="CDD" id="cd00403">
    <property type="entry name" value="Ribosomal_L1"/>
    <property type="match status" value="1"/>
</dbReference>
<dbReference type="FunFam" id="3.40.50.790:FF:000001">
    <property type="entry name" value="50S ribosomal protein L1"/>
    <property type="match status" value="1"/>
</dbReference>
<dbReference type="Gene3D" id="3.30.190.20">
    <property type="match status" value="1"/>
</dbReference>
<dbReference type="Gene3D" id="3.40.50.790">
    <property type="match status" value="1"/>
</dbReference>
<dbReference type="HAMAP" id="MF_01318_B">
    <property type="entry name" value="Ribosomal_uL1_B"/>
    <property type="match status" value="1"/>
</dbReference>
<dbReference type="InterPro" id="IPR005878">
    <property type="entry name" value="Ribosom_uL1_bac-type"/>
</dbReference>
<dbReference type="InterPro" id="IPR002143">
    <property type="entry name" value="Ribosomal_uL1"/>
</dbReference>
<dbReference type="InterPro" id="IPR023674">
    <property type="entry name" value="Ribosomal_uL1-like"/>
</dbReference>
<dbReference type="InterPro" id="IPR028364">
    <property type="entry name" value="Ribosomal_uL1/biogenesis"/>
</dbReference>
<dbReference type="InterPro" id="IPR016095">
    <property type="entry name" value="Ribosomal_uL1_3-a/b-sand"/>
</dbReference>
<dbReference type="InterPro" id="IPR023673">
    <property type="entry name" value="Ribosomal_uL1_CS"/>
</dbReference>
<dbReference type="NCBIfam" id="TIGR01169">
    <property type="entry name" value="rplA_bact"/>
    <property type="match status" value="1"/>
</dbReference>
<dbReference type="PANTHER" id="PTHR36427">
    <property type="entry name" value="54S RIBOSOMAL PROTEIN L1, MITOCHONDRIAL"/>
    <property type="match status" value="1"/>
</dbReference>
<dbReference type="PANTHER" id="PTHR36427:SF3">
    <property type="entry name" value="LARGE RIBOSOMAL SUBUNIT PROTEIN UL1M"/>
    <property type="match status" value="1"/>
</dbReference>
<dbReference type="Pfam" id="PF00687">
    <property type="entry name" value="Ribosomal_L1"/>
    <property type="match status" value="1"/>
</dbReference>
<dbReference type="PIRSF" id="PIRSF002155">
    <property type="entry name" value="Ribosomal_L1"/>
    <property type="match status" value="1"/>
</dbReference>
<dbReference type="SUPFAM" id="SSF56808">
    <property type="entry name" value="Ribosomal protein L1"/>
    <property type="match status" value="1"/>
</dbReference>
<dbReference type="PROSITE" id="PS01199">
    <property type="entry name" value="RIBOSOMAL_L1"/>
    <property type="match status" value="1"/>
</dbReference>
<proteinExistence type="inferred from homology"/>
<protein>
    <recommendedName>
        <fullName evidence="1">Large ribosomal subunit protein uL1</fullName>
    </recommendedName>
    <alternativeName>
        <fullName evidence="2">50S ribosomal protein L1</fullName>
    </alternativeName>
</protein>
<evidence type="ECO:0000255" key="1">
    <source>
        <dbReference type="HAMAP-Rule" id="MF_01318"/>
    </source>
</evidence>
<evidence type="ECO:0000305" key="2"/>
<comment type="function">
    <text evidence="1">Binds directly to 23S rRNA. The L1 stalk is quite mobile in the ribosome, and is involved in E site tRNA release.</text>
</comment>
<comment type="function">
    <text evidence="1">Protein L1 is also a translational repressor protein, it controls the translation of the L11 operon by binding to its mRNA.</text>
</comment>
<comment type="subunit">
    <text evidence="1">Part of the 50S ribosomal subunit.</text>
</comment>
<comment type="similarity">
    <text evidence="1">Belongs to the universal ribosomal protein uL1 family.</text>
</comment>